<dbReference type="EMBL" id="CP002824">
    <property type="protein sequence ID" value="AEG97013.1"/>
    <property type="molecule type" value="Genomic_DNA"/>
</dbReference>
<dbReference type="RefSeq" id="WP_015368403.1">
    <property type="nucleotide sequence ID" value="NC_015663.1"/>
</dbReference>
<dbReference type="RefSeq" id="YP_004592292.1">
    <property type="nucleotide sequence ID" value="NC_015663.1"/>
</dbReference>
<dbReference type="KEGG" id="eae:EAE_10485"/>
<dbReference type="PATRIC" id="fig|1028307.3.peg.2087"/>
<dbReference type="eggNOG" id="COG2966">
    <property type="taxonomic scope" value="Bacteria"/>
</dbReference>
<dbReference type="HOGENOM" id="CLU_070277_2_0_6"/>
<dbReference type="OrthoDB" id="9813917at2"/>
<dbReference type="Proteomes" id="UP000008881">
    <property type="component" value="Chromosome"/>
</dbReference>
<dbReference type="GO" id="GO:0005886">
    <property type="term" value="C:plasma membrane"/>
    <property type="evidence" value="ECO:0007669"/>
    <property type="project" value="UniProtKB-SubCell"/>
</dbReference>
<dbReference type="GO" id="GO:0022857">
    <property type="term" value="F:transmembrane transporter activity"/>
    <property type="evidence" value="ECO:0007669"/>
    <property type="project" value="InterPro"/>
</dbReference>
<dbReference type="GO" id="GO:0015744">
    <property type="term" value="P:succinate transport"/>
    <property type="evidence" value="ECO:0007669"/>
    <property type="project" value="TreeGrafter"/>
</dbReference>
<dbReference type="InterPro" id="IPR010619">
    <property type="entry name" value="ThrE-like_N"/>
</dbReference>
<dbReference type="InterPro" id="IPR050539">
    <property type="entry name" value="ThrE_Dicarb/AminoAcid_Exp"/>
</dbReference>
<dbReference type="PANTHER" id="PTHR34390:SF2">
    <property type="entry name" value="SUCCINATE TRANSPORTER SUBUNIT YJJP-RELATED"/>
    <property type="match status" value="1"/>
</dbReference>
<dbReference type="PANTHER" id="PTHR34390">
    <property type="entry name" value="UPF0442 PROTEIN YJJB-RELATED"/>
    <property type="match status" value="1"/>
</dbReference>
<dbReference type="Pfam" id="PF06738">
    <property type="entry name" value="ThrE"/>
    <property type="match status" value="1"/>
</dbReference>
<keyword id="KW-0997">Cell inner membrane</keyword>
<keyword id="KW-1003">Cell membrane</keyword>
<keyword id="KW-0472">Membrane</keyword>
<keyword id="KW-1185">Reference proteome</keyword>
<keyword id="KW-0812">Transmembrane</keyword>
<keyword id="KW-1133">Transmembrane helix</keyword>
<keyword id="KW-0813">Transport</keyword>
<sequence length="258" mass="28347">MQADKSEQRAVTRLCIQCALYLLQHGAESALVEELSTRLGRALGMDSVESAISSNAIVLTTIKDGECLTSTRKNSDRGINMHVVTEVQHIVIMAEHKLLDYKDVEKRFSQIKPLRYPRWLLVLMVGLSCACFCKLNNGGWDGAVVTFFASTVAMYIRQLLTHRSMHPQINFCITAFVATTISGLMLRLPAFSETPTIAMAASVLLLVPGFPLINAVADMFKGHINTGLARWAIASLLTLATCIGVVMAMTMWGLRGWA</sequence>
<accession>A0A0H3FRB6</accession>
<gene>
    <name evidence="3" type="primary">yjjP</name>
    <name evidence="6" type="ordered locus">EAE_10485</name>
</gene>
<reference key="1">
    <citation type="journal article" date="2012" name="J. Bacteriol.">
        <title>Complete genome sequence of Enterobacter aerogenes KCTC 2190.</title>
        <authorList>
            <person name="Shin S.H."/>
            <person name="Kim S."/>
            <person name="Kim J.Y."/>
            <person name="Lee S."/>
            <person name="Um Y."/>
            <person name="Oh M.K."/>
            <person name="Kim Y.R."/>
            <person name="Lee J."/>
            <person name="Yang K.S."/>
        </authorList>
    </citation>
    <scope>NUCLEOTIDE SEQUENCE [LARGE SCALE GENOMIC DNA]</scope>
    <source>
        <strain>ATCC 13048 / DSM 30053 / CCUG 1429 / JCM 1235 / KCTC 2190 / NBRC 13534 / NCIMB 10102 / NCTC 10006 / CDC 819-56</strain>
    </source>
</reference>
<reference key="2">
    <citation type="journal article" date="2018" name="J. Biosci. Bioeng.">
        <title>Identification of EayjjPB encoding a dicarboxylate transporter important for succinate production under aerobic and anaerobic conditions in Enterobacter aerogenes.</title>
        <authorList>
            <person name="Fukui K."/>
            <person name="Nanatani K."/>
            <person name="Hara Y."/>
            <person name="Tokura M."/>
            <person name="Abe K."/>
        </authorList>
    </citation>
    <scope>FUNCTION</scope>
    <scope>SUBUNIT</scope>
    <source>
        <strain>AJ110637</strain>
    </source>
</reference>
<organism>
    <name type="scientific">Klebsiella aerogenes (strain ATCC 13048 / DSM 30053 / CCUG 1429 / JCM 1235 / KCTC 2190 / NBRC 13534 / NCIMB 10102 / NCTC 10006 / CDC 819-56)</name>
    <name type="common">Enterobacter aerogenes</name>
    <dbReference type="NCBI Taxonomy" id="1028307"/>
    <lineage>
        <taxon>Bacteria</taxon>
        <taxon>Pseudomonadati</taxon>
        <taxon>Pseudomonadota</taxon>
        <taxon>Gammaproteobacteria</taxon>
        <taxon>Enterobacterales</taxon>
        <taxon>Enterobacteriaceae</taxon>
        <taxon>Klebsiella/Raoultella group</taxon>
        <taxon>Klebsiella</taxon>
    </lineage>
</organism>
<protein>
    <recommendedName>
        <fullName evidence="4">Probable succinate transporter subunit YjjP</fullName>
    </recommendedName>
</protein>
<feature type="chain" id="PRO_0000456293" description="Probable succinate transporter subunit YjjP">
    <location>
        <begin position="1"/>
        <end position="258"/>
    </location>
</feature>
<feature type="transmembrane region" description="Helical" evidence="1">
    <location>
        <begin position="116"/>
        <end position="137"/>
    </location>
</feature>
<feature type="transmembrane region" description="Helical" evidence="1">
    <location>
        <begin position="143"/>
        <end position="160"/>
    </location>
</feature>
<feature type="transmembrane region" description="Helical" evidence="1">
    <location>
        <begin position="171"/>
        <end position="191"/>
    </location>
</feature>
<feature type="transmembrane region" description="Helical" evidence="1">
    <location>
        <begin position="197"/>
        <end position="217"/>
    </location>
</feature>
<feature type="transmembrane region" description="Helical" evidence="1">
    <location>
        <begin position="231"/>
        <end position="251"/>
    </location>
</feature>
<name>YJJP_KLEAK</name>
<comment type="function">
    <text evidence="2">Involved in succinate export with YjjB. Both proteins are required for export (PubMed:29395959). Participates in succinate export, but also in the export of other dicarboxylates, such as fumarate and malate (PubMed:29395959). Contributes to succinate production under both aerobic and anaerobic conditions, and increases fumarate and malate production during anaerobic succinate production (PubMed:29395959).</text>
</comment>
<comment type="subunit">
    <text evidence="2">The transporter is composed of YjjB and YjjP.</text>
</comment>
<comment type="subcellular location">
    <subcellularLocation>
        <location evidence="5">Cell inner membrane</location>
        <topology evidence="1">Multi-pass membrane protein</topology>
    </subcellularLocation>
</comment>
<comment type="miscellaneous">
    <text evidence="3">YjjPB constitutes a split-type ThrE family transporter.</text>
</comment>
<comment type="similarity">
    <text evidence="4">Belongs to the ThrE exporter (TC 2.A.79) family.</text>
</comment>
<proteinExistence type="evidence at protein level"/>
<evidence type="ECO:0000255" key="1"/>
<evidence type="ECO:0000269" key="2">
    <source>
    </source>
</evidence>
<evidence type="ECO:0000303" key="3">
    <source>
    </source>
</evidence>
<evidence type="ECO:0000305" key="4"/>
<evidence type="ECO:0000305" key="5">
    <source>
    </source>
</evidence>
<evidence type="ECO:0000312" key="6">
    <source>
        <dbReference type="EMBL" id="AEG97013.1"/>
    </source>
</evidence>